<geneLocation type="mitochondrion"/>
<keyword id="KW-0106">Calcium</keyword>
<keyword id="KW-0186">Copper</keyword>
<keyword id="KW-0249">Electron transport</keyword>
<keyword id="KW-0349">Heme</keyword>
<keyword id="KW-0408">Iron</keyword>
<keyword id="KW-0460">Magnesium</keyword>
<keyword id="KW-0472">Membrane</keyword>
<keyword id="KW-0479">Metal-binding</keyword>
<keyword id="KW-0496">Mitochondrion</keyword>
<keyword id="KW-0999">Mitochondrion inner membrane</keyword>
<keyword id="KW-1185">Reference proteome</keyword>
<keyword id="KW-0679">Respiratory chain</keyword>
<keyword id="KW-1278">Translocase</keyword>
<keyword id="KW-0812">Transmembrane</keyword>
<keyword id="KW-1133">Transmembrane helix</keyword>
<keyword id="KW-0813">Transport</keyword>
<dbReference type="EC" id="7.1.1.9"/>
<dbReference type="EMBL" id="AJ307410">
    <property type="protein sequence ID" value="CAC28091.2"/>
    <property type="molecule type" value="Genomic_DNA"/>
</dbReference>
<dbReference type="RefSeq" id="NP_075425.2">
    <property type="nucleotide sequence ID" value="NC_002659.1"/>
</dbReference>
<dbReference type="SMR" id="Q9B6E7"/>
<dbReference type="FunCoup" id="Q9B6E7">
    <property type="interactions" value="625"/>
</dbReference>
<dbReference type="STRING" id="284591.Q9B6E7"/>
<dbReference type="GeneID" id="802596"/>
<dbReference type="KEGG" id="yli:802596"/>
<dbReference type="InParanoid" id="Q9B6E7"/>
<dbReference type="UniPathway" id="UPA00705"/>
<dbReference type="Proteomes" id="UP000001300">
    <property type="component" value="Mitochondrion"/>
</dbReference>
<dbReference type="GO" id="GO:0005743">
    <property type="term" value="C:mitochondrial inner membrane"/>
    <property type="evidence" value="ECO:0007669"/>
    <property type="project" value="UniProtKB-SubCell"/>
</dbReference>
<dbReference type="GO" id="GO:0045277">
    <property type="term" value="C:respiratory chain complex IV"/>
    <property type="evidence" value="ECO:0000318"/>
    <property type="project" value="GO_Central"/>
</dbReference>
<dbReference type="GO" id="GO:0004129">
    <property type="term" value="F:cytochrome-c oxidase activity"/>
    <property type="evidence" value="ECO:0007669"/>
    <property type="project" value="UniProtKB-EC"/>
</dbReference>
<dbReference type="GO" id="GO:0020037">
    <property type="term" value="F:heme binding"/>
    <property type="evidence" value="ECO:0007669"/>
    <property type="project" value="InterPro"/>
</dbReference>
<dbReference type="GO" id="GO:0046872">
    <property type="term" value="F:metal ion binding"/>
    <property type="evidence" value="ECO:0007669"/>
    <property type="project" value="UniProtKB-KW"/>
</dbReference>
<dbReference type="GO" id="GO:0009060">
    <property type="term" value="P:aerobic respiration"/>
    <property type="evidence" value="ECO:0000318"/>
    <property type="project" value="GO_Central"/>
</dbReference>
<dbReference type="GO" id="GO:0006119">
    <property type="term" value="P:oxidative phosphorylation"/>
    <property type="evidence" value="ECO:0007669"/>
    <property type="project" value="UniProtKB-UniPathway"/>
</dbReference>
<dbReference type="GO" id="GO:0022904">
    <property type="term" value="P:respiratory electron transport chain"/>
    <property type="evidence" value="ECO:0000318"/>
    <property type="project" value="GO_Central"/>
</dbReference>
<dbReference type="CDD" id="cd01663">
    <property type="entry name" value="Cyt_c_Oxidase_I"/>
    <property type="match status" value="1"/>
</dbReference>
<dbReference type="FunFam" id="1.20.210.10:FF:000001">
    <property type="entry name" value="Cytochrome c oxidase subunit 1"/>
    <property type="match status" value="1"/>
</dbReference>
<dbReference type="Gene3D" id="1.20.210.10">
    <property type="entry name" value="Cytochrome c oxidase-like, subunit I domain"/>
    <property type="match status" value="1"/>
</dbReference>
<dbReference type="InterPro" id="IPR023616">
    <property type="entry name" value="Cyt_c_oxase-like_su1_dom"/>
</dbReference>
<dbReference type="InterPro" id="IPR036927">
    <property type="entry name" value="Cyt_c_oxase-like_su1_sf"/>
</dbReference>
<dbReference type="InterPro" id="IPR000883">
    <property type="entry name" value="Cyt_C_Oxase_1"/>
</dbReference>
<dbReference type="InterPro" id="IPR033944">
    <property type="entry name" value="Cyt_c_oxase_su1_dom"/>
</dbReference>
<dbReference type="PANTHER" id="PTHR10422">
    <property type="entry name" value="CYTOCHROME C OXIDASE SUBUNIT 1"/>
    <property type="match status" value="1"/>
</dbReference>
<dbReference type="PANTHER" id="PTHR10422:SF18">
    <property type="entry name" value="CYTOCHROME C OXIDASE SUBUNIT 1"/>
    <property type="match status" value="1"/>
</dbReference>
<dbReference type="Pfam" id="PF00115">
    <property type="entry name" value="COX1"/>
    <property type="match status" value="1"/>
</dbReference>
<dbReference type="PRINTS" id="PR01165">
    <property type="entry name" value="CYCOXIDASEI"/>
</dbReference>
<dbReference type="SUPFAM" id="SSF81442">
    <property type="entry name" value="Cytochrome c oxidase subunit I-like"/>
    <property type="match status" value="1"/>
</dbReference>
<dbReference type="PROSITE" id="PS50855">
    <property type="entry name" value="COX1"/>
    <property type="match status" value="1"/>
</dbReference>
<organism>
    <name type="scientific">Yarrowia lipolytica (strain CLIB 122 / E 150)</name>
    <name type="common">Yeast</name>
    <name type="synonym">Candida lipolytica</name>
    <dbReference type="NCBI Taxonomy" id="284591"/>
    <lineage>
        <taxon>Eukaryota</taxon>
        <taxon>Fungi</taxon>
        <taxon>Dikarya</taxon>
        <taxon>Ascomycota</taxon>
        <taxon>Saccharomycotina</taxon>
        <taxon>Dipodascomycetes</taxon>
        <taxon>Dipodascales</taxon>
        <taxon>Dipodascales incertae sedis</taxon>
        <taxon>Yarrowia</taxon>
    </lineage>
</organism>
<evidence type="ECO:0000250" key="1">
    <source>
        <dbReference type="UniProtKB" id="P00396"/>
    </source>
</evidence>
<evidence type="ECO:0000250" key="2">
    <source>
        <dbReference type="UniProtKB" id="P00401"/>
    </source>
</evidence>
<evidence type="ECO:0000255" key="3"/>
<evidence type="ECO:0000305" key="4"/>
<feature type="chain" id="PRO_0000183431" description="Cytochrome c oxidase subunit 1">
    <location>
        <begin position="1"/>
        <end position="535"/>
    </location>
</feature>
<feature type="transmembrane region" description="Helical" evidence="3">
    <location>
        <begin position="21"/>
        <end position="43"/>
    </location>
</feature>
<feature type="transmembrane region" description="Helical" evidence="3">
    <location>
        <begin position="63"/>
        <end position="85"/>
    </location>
</feature>
<feature type="transmembrane region" description="Helical" evidence="3">
    <location>
        <begin position="106"/>
        <end position="128"/>
    </location>
</feature>
<feature type="transmembrane region" description="Helical" evidence="3">
    <location>
        <begin position="153"/>
        <end position="175"/>
    </location>
</feature>
<feature type="transmembrane region" description="Helical" evidence="3">
    <location>
        <begin position="188"/>
        <end position="210"/>
    </location>
</feature>
<feature type="transmembrane region" description="Helical" evidence="3">
    <location>
        <begin position="242"/>
        <end position="264"/>
    </location>
</feature>
<feature type="transmembrane region" description="Helical" evidence="3">
    <location>
        <begin position="271"/>
        <end position="293"/>
    </location>
</feature>
<feature type="transmembrane region" description="Helical" evidence="3">
    <location>
        <begin position="308"/>
        <end position="330"/>
    </location>
</feature>
<feature type="transmembrane region" description="Helical" evidence="3">
    <location>
        <begin position="342"/>
        <end position="364"/>
    </location>
</feature>
<feature type="transmembrane region" description="Helical" evidence="3">
    <location>
        <begin position="379"/>
        <end position="401"/>
    </location>
</feature>
<feature type="transmembrane region" description="Helical" evidence="3">
    <location>
        <begin position="414"/>
        <end position="436"/>
    </location>
</feature>
<feature type="transmembrane region" description="Helical" evidence="3">
    <location>
        <begin position="456"/>
        <end position="478"/>
    </location>
</feature>
<feature type="binding site" evidence="2">
    <location>
        <position position="44"/>
    </location>
    <ligand>
        <name>Ca(2+)</name>
        <dbReference type="ChEBI" id="CHEBI:29108"/>
    </ligand>
</feature>
<feature type="binding site" evidence="2">
    <location>
        <position position="49"/>
    </location>
    <ligand>
        <name>Ca(2+)</name>
        <dbReference type="ChEBI" id="CHEBI:29108"/>
    </ligand>
</feature>
<feature type="binding site" description="axial binding residue" evidence="2">
    <location>
        <position position="67"/>
    </location>
    <ligand>
        <name>Fe(II)-heme a</name>
        <dbReference type="ChEBI" id="CHEBI:61715"/>
        <note>low-spin</note>
    </ligand>
    <ligandPart>
        <name>Fe</name>
        <dbReference type="ChEBI" id="CHEBI:18248"/>
    </ligandPart>
</feature>
<feature type="binding site" evidence="2">
    <location>
        <position position="246"/>
    </location>
    <ligand>
        <name>Cu cation</name>
        <dbReference type="ChEBI" id="CHEBI:23378"/>
        <label>B</label>
    </ligand>
</feature>
<feature type="binding site" evidence="1">
    <location>
        <position position="250"/>
    </location>
    <ligand>
        <name>O2</name>
        <dbReference type="ChEBI" id="CHEBI:15379"/>
    </ligand>
</feature>
<feature type="binding site" evidence="2">
    <location>
        <position position="295"/>
    </location>
    <ligand>
        <name>Cu cation</name>
        <dbReference type="ChEBI" id="CHEBI:23378"/>
        <label>B</label>
    </ligand>
</feature>
<feature type="binding site" evidence="2">
    <location>
        <position position="296"/>
    </location>
    <ligand>
        <name>Cu cation</name>
        <dbReference type="ChEBI" id="CHEBI:23378"/>
        <label>B</label>
    </ligand>
</feature>
<feature type="binding site" evidence="2">
    <location>
        <position position="373"/>
    </location>
    <ligand>
        <name>Mg(2+)</name>
        <dbReference type="ChEBI" id="CHEBI:18420"/>
        <note>ligand shared with subunit 2</note>
    </ligand>
</feature>
<feature type="binding site" evidence="2">
    <location>
        <position position="374"/>
    </location>
    <ligand>
        <name>Mg(2+)</name>
        <dbReference type="ChEBI" id="CHEBI:18420"/>
        <note>ligand shared with subunit 2</note>
    </ligand>
</feature>
<feature type="binding site" description="axial binding residue" evidence="2">
    <location>
        <position position="381"/>
    </location>
    <ligand>
        <name>heme a3</name>
        <dbReference type="ChEBI" id="CHEBI:83282"/>
        <note>high-spin</note>
    </ligand>
    <ligandPart>
        <name>Fe</name>
        <dbReference type="ChEBI" id="CHEBI:18248"/>
    </ligandPart>
</feature>
<feature type="binding site" description="axial binding residue" evidence="2">
    <location>
        <position position="383"/>
    </location>
    <ligand>
        <name>Fe(II)-heme a</name>
        <dbReference type="ChEBI" id="CHEBI:61715"/>
        <note>low-spin</note>
    </ligand>
    <ligandPart>
        <name>Fe</name>
        <dbReference type="ChEBI" id="CHEBI:18248"/>
    </ligandPart>
</feature>
<feature type="cross-link" description="1'-histidyl-3'-tyrosine (His-Tyr)" evidence="2">
    <location>
        <begin position="246"/>
        <end position="250"/>
    </location>
</feature>
<reference key="1">
    <citation type="journal article" date="2001" name="Comp. Funct. Genomics">
        <title>The complete mitochondrial genome of Yarrowia lipolytica.</title>
        <authorList>
            <person name="Kerscher S."/>
            <person name="Durstewitz G."/>
            <person name="Casaregola S."/>
            <person name="Gaillardin C."/>
            <person name="Brandt U."/>
        </authorList>
    </citation>
    <scope>NUCLEOTIDE SEQUENCE [LARGE SCALE GENOMIC DNA]</scope>
    <source>
        <strain>ATCC 20460 / W29 / CBS 7504 / IFP29</strain>
    </source>
</reference>
<protein>
    <recommendedName>
        <fullName>Cytochrome c oxidase subunit 1</fullName>
        <ecNumber>7.1.1.9</ecNumber>
    </recommendedName>
    <alternativeName>
        <fullName>Cytochrome c oxidase polypeptide I</fullName>
    </alternativeName>
</protein>
<proteinExistence type="inferred from homology"/>
<comment type="function">
    <text evidence="2">Component of the cytochrome c oxidase, the last enzyme in the mitochondrial electron transport chain which drives oxidative phosphorylation. The respiratory chain contains 3 multisubunit complexes succinate dehydrogenase (complex II, CII), ubiquinol-cytochrome c oxidoreductase (cytochrome b-c1 complex, complex III, CIII) and cytochrome c oxidase (complex IV, CIV), that cooperate to transfer electrons derived from NADH and succinate to molecular oxygen, creating an electrochemical gradient over the inner membrane that drives transmembrane transport and the ATP synthase. Cytochrome c oxidase is the component of the respiratory chain that catalyzes the reduction of oxygen to water. Electrons originating from reduced cytochrome c in the intermembrane space (IMS) are transferred via the dinuclear copper A center (CU(A)) of subunit 2 and heme A of subunit 1 to the active site in subunit 1, a binuclear center (BNC) formed by heme A3 and copper B (CU(B)). The BNC reduces molecular oxygen to 2 water molecules using 4 electrons from cytochrome c in the IMS and 4 protons from the mitochondrial matrix.</text>
</comment>
<comment type="catalytic activity">
    <reaction evidence="2">
        <text>4 Fe(II)-[cytochrome c] + O2 + 8 H(+)(in) = 4 Fe(III)-[cytochrome c] + 2 H2O + 4 H(+)(out)</text>
        <dbReference type="Rhea" id="RHEA:11436"/>
        <dbReference type="Rhea" id="RHEA-COMP:10350"/>
        <dbReference type="Rhea" id="RHEA-COMP:14399"/>
        <dbReference type="ChEBI" id="CHEBI:15377"/>
        <dbReference type="ChEBI" id="CHEBI:15378"/>
        <dbReference type="ChEBI" id="CHEBI:15379"/>
        <dbReference type="ChEBI" id="CHEBI:29033"/>
        <dbReference type="ChEBI" id="CHEBI:29034"/>
        <dbReference type="EC" id="7.1.1.9"/>
    </reaction>
    <physiologicalReaction direction="left-to-right" evidence="2">
        <dbReference type="Rhea" id="RHEA:11437"/>
    </physiologicalReaction>
</comment>
<comment type="cofactor">
    <cofactor evidence="2">
        <name>heme</name>
        <dbReference type="ChEBI" id="CHEBI:30413"/>
    </cofactor>
    <text evidence="2">Binds 2 heme A groups non-covalently per subunit.</text>
</comment>
<comment type="cofactor">
    <cofactor evidence="2">
        <name>Cu cation</name>
        <dbReference type="ChEBI" id="CHEBI:23378"/>
    </cofactor>
    <text evidence="2">Binds a copper B center.</text>
</comment>
<comment type="pathway">
    <text evidence="2">Energy metabolism; oxidative phosphorylation.</text>
</comment>
<comment type="subunit">
    <text evidence="2">Component of the cytochrome c oxidase (complex IV, CIV), a multisubunit enzyme composed of a catalytic core of 3 subunits and several supernumerary subunits. The complex exists as a monomer or a dimer and forms supercomplexes (SCs) in the inner mitochondrial membrane with ubiquinol-cytochrome c oxidoreductase (cytochrome b-c1 complex, complex III, CIII).</text>
</comment>
<comment type="subcellular location">
    <subcellularLocation>
        <location evidence="2">Mitochondrion inner membrane</location>
        <topology evidence="2">Multi-pass membrane protein</topology>
    </subcellularLocation>
</comment>
<comment type="similarity">
    <text evidence="4">Belongs to the heme-copper respiratory oxidase family.</text>
</comment>
<name>COX1_YARLI</name>
<sequence>MSLKLNIQRWLFSTNAKDIAVLYFIFALFSAMIGTGLSAIIRLELANTGSPFLHGNTQAFNVVITAHAILMIFFFVMPALVGGFGNYLMPLMLGASDMAFARLNNISFWLLVPSLILILTSALVEAGAGTGWTVYFPLAGIQSHSGPAVDLAIFSLHLSGFSSLLGAINFITTFINMRTIGMKYENVPLFAWAVLFTAILLLLSLPVLAAGLTMGIFDRNFNTSFFEYAGGGDAVLYQHLFYWWNHPEVYILIIPGFGIISHAVSAIASKPVFGVQGMIYAMWSIGLLGFCVWSHHMFAVGLDSDTRAYFTSATMVIAVPTSIKIFSWLATLYGGTIRLNVTALFALGFIFLFTIGGLTGVVLANSALDIPFHDSYYVVAHFHYVLSMGAVFSIFCGWYLWSPKILGLHYNERLSHIHFWLMFIGVNVTFFPMHFLGLQGMPRRINDYPDAFIGWNQVASLGSIISIVASIVFIYVVYDQLTNGLHQGNKALDSQFKPSFMGTNLNVEGYTGPTLEWTVSTPPSLHAFNTPAVLY</sequence>
<gene>
    <name type="primary">COX1</name>
</gene>
<accession>Q9B6E7</accession>